<name>NSG2_HUMAN</name>
<feature type="chain" id="PRO_0000164366" description="Neuronal vesicle trafficking-associated protein 2">
    <location>
        <begin position="1"/>
        <end position="171"/>
    </location>
</feature>
<feature type="topological domain" description="Cytoplasmic" evidence="3">
    <location>
        <begin position="1"/>
        <end position="71"/>
    </location>
</feature>
<feature type="transmembrane region" description="Helical; Signal-anchor for type II membrane protein" evidence="3">
    <location>
        <begin position="72"/>
        <end position="92"/>
    </location>
</feature>
<feature type="topological domain" description="Lumenal" evidence="3">
    <location>
        <begin position="93"/>
        <end position="171"/>
    </location>
</feature>
<feature type="region of interest" description="Disordered" evidence="4">
    <location>
        <begin position="1"/>
        <end position="21"/>
    </location>
</feature>
<feature type="compositionally biased region" description="Polar residues" evidence="4">
    <location>
        <begin position="1"/>
        <end position="10"/>
    </location>
</feature>
<feature type="sequence conflict" description="In Ref. 2; AAF14874." evidence="6" ref="2">
    <original>P</original>
    <variation>R</variation>
    <location>
        <position position="152"/>
    </location>
</feature>
<keyword id="KW-0966">Cell projection</keyword>
<keyword id="KW-0968">Cytoplasmic vesicle</keyword>
<keyword id="KW-0967">Endosome</keyword>
<keyword id="KW-0333">Golgi apparatus</keyword>
<keyword id="KW-0458">Lysosome</keyword>
<keyword id="KW-0472">Membrane</keyword>
<keyword id="KW-1267">Proteomics identification</keyword>
<keyword id="KW-1185">Reference proteome</keyword>
<keyword id="KW-0735">Signal-anchor</keyword>
<keyword id="KW-0812">Transmembrane</keyword>
<keyword id="KW-1133">Transmembrane helix</keyword>
<dbReference type="EMBL" id="AF133422">
    <property type="protein sequence ID" value="AAD30539.1"/>
    <property type="molecule type" value="mRNA"/>
</dbReference>
<dbReference type="EMBL" id="AF113537">
    <property type="protein sequence ID" value="AAF14874.1"/>
    <property type="molecule type" value="mRNA"/>
</dbReference>
<dbReference type="EMBL" id="AK312359">
    <property type="protein sequence ID" value="BAG35277.1"/>
    <property type="molecule type" value="mRNA"/>
</dbReference>
<dbReference type="EMBL" id="CH471062">
    <property type="protein sequence ID" value="EAW61383.1"/>
    <property type="molecule type" value="Genomic_DNA"/>
</dbReference>
<dbReference type="EMBL" id="CH471062">
    <property type="protein sequence ID" value="EAW61384.1"/>
    <property type="molecule type" value="Genomic_DNA"/>
</dbReference>
<dbReference type="EMBL" id="BC002619">
    <property type="protein sequence ID" value="AAH02619.1"/>
    <property type="molecule type" value="mRNA"/>
</dbReference>
<dbReference type="CCDS" id="CCDS4391.1"/>
<dbReference type="RefSeq" id="NP_057064.1">
    <property type="nucleotide sequence ID" value="NM_015980.5"/>
</dbReference>
<dbReference type="SMR" id="Q9Y328"/>
<dbReference type="BioGRID" id="119640">
    <property type="interactions" value="24"/>
</dbReference>
<dbReference type="FunCoup" id="Q9Y328">
    <property type="interactions" value="347"/>
</dbReference>
<dbReference type="IntAct" id="Q9Y328">
    <property type="interactions" value="25"/>
</dbReference>
<dbReference type="MINT" id="Q9Y328"/>
<dbReference type="STRING" id="9606.ENSP00000307722"/>
<dbReference type="GlyGen" id="Q9Y328">
    <property type="glycosylation" value="1 site, 1 O-linked glycan (1 site)"/>
</dbReference>
<dbReference type="iPTMnet" id="Q9Y328"/>
<dbReference type="PhosphoSitePlus" id="Q9Y328"/>
<dbReference type="BioMuta" id="NSG2"/>
<dbReference type="DMDM" id="21263843"/>
<dbReference type="MassIVE" id="Q9Y328"/>
<dbReference type="PaxDb" id="9606-ENSP00000307722"/>
<dbReference type="PeptideAtlas" id="Q9Y328"/>
<dbReference type="ProteomicsDB" id="85965"/>
<dbReference type="Antibodypedia" id="45952">
    <property type="antibodies" value="78 antibodies from 19 providers"/>
</dbReference>
<dbReference type="DNASU" id="51617"/>
<dbReference type="Ensembl" id="ENST00000303177.8">
    <property type="protein sequence ID" value="ENSP00000307722.3"/>
    <property type="gene ID" value="ENSG00000170091.11"/>
</dbReference>
<dbReference type="Ensembl" id="ENST00000519717.1">
    <property type="protein sequence ID" value="ENSP00000431119.1"/>
    <property type="gene ID" value="ENSG00000170091.11"/>
</dbReference>
<dbReference type="GeneID" id="51617"/>
<dbReference type="KEGG" id="hsa:51617"/>
<dbReference type="MANE-Select" id="ENST00000303177.8">
    <property type="protein sequence ID" value="ENSP00000307722.3"/>
    <property type="RefSeq nucleotide sequence ID" value="NM_015980.5"/>
    <property type="RefSeq protein sequence ID" value="NP_057064.1"/>
</dbReference>
<dbReference type="UCSC" id="uc003mcx.4">
    <property type="organism name" value="human"/>
</dbReference>
<dbReference type="AGR" id="HGNC:24955"/>
<dbReference type="CTD" id="51617"/>
<dbReference type="DisGeNET" id="51617"/>
<dbReference type="GeneCards" id="NSG2"/>
<dbReference type="HGNC" id="HGNC:24955">
    <property type="gene designation" value="NSG2"/>
</dbReference>
<dbReference type="HPA" id="ENSG00000170091">
    <property type="expression patterns" value="Tissue enriched (brain)"/>
</dbReference>
<dbReference type="MIM" id="616752">
    <property type="type" value="gene"/>
</dbReference>
<dbReference type="neXtProt" id="NX_Q9Y328"/>
<dbReference type="OpenTargets" id="ENSG00000170091"/>
<dbReference type="VEuPathDB" id="HostDB:ENSG00000170091"/>
<dbReference type="eggNOG" id="ENOG502QRFC">
    <property type="taxonomic scope" value="Eukaryota"/>
</dbReference>
<dbReference type="GeneTree" id="ENSGT00390000000483"/>
<dbReference type="InParanoid" id="Q9Y328"/>
<dbReference type="OMA" id="LWREDSW"/>
<dbReference type="OrthoDB" id="8924576at2759"/>
<dbReference type="PAN-GO" id="Q9Y328">
    <property type="GO annotations" value="5 GO annotations based on evolutionary models"/>
</dbReference>
<dbReference type="PhylomeDB" id="Q9Y328"/>
<dbReference type="PathwayCommons" id="Q9Y328"/>
<dbReference type="SignaLink" id="Q9Y328"/>
<dbReference type="BioGRID-ORCS" id="51617">
    <property type="hits" value="4 hits in 1005 CRISPR screens"/>
</dbReference>
<dbReference type="GenomeRNAi" id="51617"/>
<dbReference type="Pharos" id="Q9Y328">
    <property type="development level" value="Tbio"/>
</dbReference>
<dbReference type="PRO" id="PR:Q9Y328"/>
<dbReference type="Proteomes" id="UP000005640">
    <property type="component" value="Chromosome 5"/>
</dbReference>
<dbReference type="RNAct" id="Q9Y328">
    <property type="molecule type" value="protein"/>
</dbReference>
<dbReference type="Bgee" id="ENSG00000170091">
    <property type="expression patterns" value="Expressed in cortical plate and 136 other cell types or tissues"/>
</dbReference>
<dbReference type="ExpressionAtlas" id="Q9Y328">
    <property type="expression patterns" value="baseline and differential"/>
</dbReference>
<dbReference type="GO" id="GO:0030659">
    <property type="term" value="C:cytoplasmic vesicle membrane"/>
    <property type="evidence" value="ECO:0000250"/>
    <property type="project" value="UniProtKB"/>
</dbReference>
<dbReference type="GO" id="GO:0030425">
    <property type="term" value="C:dendrite"/>
    <property type="evidence" value="ECO:0000250"/>
    <property type="project" value="UniProtKB"/>
</dbReference>
<dbReference type="GO" id="GO:0005769">
    <property type="term" value="C:early endosome"/>
    <property type="evidence" value="ECO:0000250"/>
    <property type="project" value="UniProtKB"/>
</dbReference>
<dbReference type="GO" id="GO:0031901">
    <property type="term" value="C:early endosome membrane"/>
    <property type="evidence" value="ECO:0007669"/>
    <property type="project" value="UniProtKB-SubCell"/>
</dbReference>
<dbReference type="GO" id="GO:0005768">
    <property type="term" value="C:endosome"/>
    <property type="evidence" value="ECO:0000250"/>
    <property type="project" value="UniProtKB"/>
</dbReference>
<dbReference type="GO" id="GO:0098978">
    <property type="term" value="C:glutamatergic synapse"/>
    <property type="evidence" value="ECO:0007669"/>
    <property type="project" value="Ensembl"/>
</dbReference>
<dbReference type="GO" id="GO:0005794">
    <property type="term" value="C:Golgi apparatus"/>
    <property type="evidence" value="ECO:0000314"/>
    <property type="project" value="HPA"/>
</dbReference>
<dbReference type="GO" id="GO:1990674">
    <property type="term" value="C:Golgi cis cisterna membrane"/>
    <property type="evidence" value="ECO:0000250"/>
    <property type="project" value="UniProtKB"/>
</dbReference>
<dbReference type="GO" id="GO:0005770">
    <property type="term" value="C:late endosome"/>
    <property type="evidence" value="ECO:0000250"/>
    <property type="project" value="UniProtKB"/>
</dbReference>
<dbReference type="GO" id="GO:0043202">
    <property type="term" value="C:lysosomal lumen"/>
    <property type="evidence" value="ECO:0007669"/>
    <property type="project" value="UniProtKB-SubCell"/>
</dbReference>
<dbReference type="GO" id="GO:0016020">
    <property type="term" value="C:membrane"/>
    <property type="evidence" value="ECO:0000318"/>
    <property type="project" value="GO_Central"/>
</dbReference>
<dbReference type="GO" id="GO:0032585">
    <property type="term" value="C:multivesicular body membrane"/>
    <property type="evidence" value="ECO:0000250"/>
    <property type="project" value="UniProtKB"/>
</dbReference>
<dbReference type="GO" id="GO:0098839">
    <property type="term" value="C:postsynaptic density membrane"/>
    <property type="evidence" value="ECO:0007669"/>
    <property type="project" value="Ensembl"/>
</dbReference>
<dbReference type="GO" id="GO:0032588">
    <property type="term" value="C:trans-Golgi network membrane"/>
    <property type="evidence" value="ECO:0000250"/>
    <property type="project" value="UniProtKB"/>
</dbReference>
<dbReference type="GO" id="GO:0032051">
    <property type="term" value="F:clathrin light chain binding"/>
    <property type="evidence" value="ECO:0000318"/>
    <property type="project" value="GO_Central"/>
</dbReference>
<dbReference type="GO" id="GO:0048268">
    <property type="term" value="P:clathrin coat assembly"/>
    <property type="evidence" value="ECO:0000318"/>
    <property type="project" value="GO_Central"/>
</dbReference>
<dbReference type="GO" id="GO:0016197">
    <property type="term" value="P:endosomal transport"/>
    <property type="evidence" value="ECO:0000318"/>
    <property type="project" value="GO_Central"/>
</dbReference>
<dbReference type="GO" id="GO:0099072">
    <property type="term" value="P:regulation of postsynaptic membrane neurotransmitter receptor levels"/>
    <property type="evidence" value="ECO:0007669"/>
    <property type="project" value="Ensembl"/>
</dbReference>
<dbReference type="InterPro" id="IPR009431">
    <property type="entry name" value="NSG"/>
</dbReference>
<dbReference type="PANTHER" id="PTHR28546:SF2">
    <property type="entry name" value="NEURONAL VESICLE TRAFFICKING-ASSOCIATED PROTEIN 2"/>
    <property type="match status" value="1"/>
</dbReference>
<dbReference type="PANTHER" id="PTHR28546">
    <property type="entry name" value="NEURONAL VESICLE TRAFFICKING-ASSOCIATED PROTEIN 2-RELATED"/>
    <property type="match status" value="1"/>
</dbReference>
<dbReference type="Pfam" id="PF06387">
    <property type="entry name" value="Calcyon"/>
    <property type="match status" value="1"/>
</dbReference>
<dbReference type="PIRSF" id="PIRSF002383">
    <property type="entry name" value="Calcyon"/>
    <property type="match status" value="1"/>
</dbReference>
<protein>
    <recommendedName>
        <fullName evidence="7">Neuronal vesicle trafficking-associated protein 2</fullName>
    </recommendedName>
    <alternativeName>
        <fullName evidence="7">Neuron-specific protein family member 2</fullName>
    </alternativeName>
    <alternativeName>
        <fullName>Protein p19</fullName>
        <shortName evidence="5">Hmp19</shortName>
    </alternativeName>
</protein>
<accession>Q9Y328</accession>
<accession>B2R5Y0</accession>
<accession>D3DQN0</accession>
<accession>Q9UHX8</accession>
<proteinExistence type="evidence at protein level"/>
<comment type="interaction">
    <interactant intactId="EBI-7101695">
        <id>Q9Y328</id>
    </interactant>
    <interactant intactId="EBI-12109402">
        <id>Q86W74-2</id>
        <label>ANKRD46</label>
    </interactant>
    <organismsDiffer>false</organismsDiffer>
    <experiments>3</experiments>
</comment>
<comment type="interaction">
    <interactant intactId="EBI-7101695">
        <id>Q9Y328</id>
    </interactant>
    <interactant intactId="EBI-11989440">
        <id>Q9BXN2-6</id>
        <label>CLEC7A</label>
    </interactant>
    <organismsDiffer>false</organismsDiffer>
    <experiments>3</experiments>
</comment>
<comment type="interaction">
    <interactant intactId="EBI-7101695">
        <id>Q9Y328</id>
    </interactant>
    <interactant intactId="EBI-354921">
        <id>P11021</id>
        <label>HSPA5</label>
    </interactant>
    <organismsDiffer>false</organismsDiffer>
    <experiments>2</experiments>
</comment>
<comment type="interaction">
    <interactant intactId="EBI-7101695">
        <id>Q9Y328</id>
    </interactant>
    <interactant intactId="EBI-12855824">
        <id>O14718</id>
        <label>RRH</label>
    </interactant>
    <organismsDiffer>false</organismsDiffer>
    <experiments>3</experiments>
</comment>
<comment type="interaction">
    <interactant intactId="EBI-7101695">
        <id>Q9Y328</id>
    </interactant>
    <interactant intactId="EBI-10243654">
        <id>Q5BVD1</id>
        <label>TTMP</label>
    </interactant>
    <organismsDiffer>false</organismsDiffer>
    <experiments>3</experiments>
</comment>
<comment type="subcellular location">
    <subcellularLocation>
        <location evidence="2">Membrane</location>
        <topology evidence="2">Single-pass type II membrane protein</topology>
    </subcellularLocation>
    <subcellularLocation>
        <location evidence="2">Golgi apparatus</location>
        <location evidence="2">trans-Golgi network membrane</location>
    </subcellularLocation>
    <subcellularLocation>
        <location evidence="2">Cell projection</location>
        <location evidence="2">Dendrite</location>
    </subcellularLocation>
    <subcellularLocation>
        <location evidence="2">Endosome membrane</location>
    </subcellularLocation>
    <subcellularLocation>
        <location evidence="2">Early endosome membrane</location>
    </subcellularLocation>
    <subcellularLocation>
        <location evidence="2">Late endosome membrane</location>
    </subcellularLocation>
    <subcellularLocation>
        <location evidence="2">Lysosome lumen</location>
    </subcellularLocation>
    <subcellularLocation>
        <location evidence="1">Cytoplasmic vesicle membrane</location>
    </subcellularLocation>
    <subcellularLocation>
        <location evidence="1">Golgi apparatus</location>
        <location evidence="1">Golgi stack membrane</location>
    </subcellularLocation>
    <subcellularLocation>
        <location evidence="1">Endosome</location>
        <location evidence="1">Multivesicular body membrane</location>
    </subcellularLocation>
    <text evidence="1 2">Endocytosed from the cell surface, thus entered into early endosomes, trafficks to late endosomes and degradates in lysosomes (By similarity). Mainly Golgi stack, but also found in small vacuolar organelles and multivesicular bodies. Found in both stationary and motile endosomes (By similarity).</text>
</comment>
<comment type="similarity">
    <text evidence="6">Belongs to the NSG family.</text>
</comment>
<evidence type="ECO:0000250" key="1">
    <source>
        <dbReference type="UniProtKB" id="P47759"/>
    </source>
</evidence>
<evidence type="ECO:0000250" key="2">
    <source>
        <dbReference type="UniProtKB" id="Q3KR51"/>
    </source>
</evidence>
<evidence type="ECO:0000255" key="3"/>
<evidence type="ECO:0000256" key="4">
    <source>
        <dbReference type="SAM" id="MobiDB-lite"/>
    </source>
</evidence>
<evidence type="ECO:0000303" key="5">
    <source ref="1"/>
</evidence>
<evidence type="ECO:0000305" key="6"/>
<evidence type="ECO:0000312" key="7">
    <source>
        <dbReference type="HGNC" id="HGNC:24955"/>
    </source>
</evidence>
<organism>
    <name type="scientific">Homo sapiens</name>
    <name type="common">Human</name>
    <dbReference type="NCBI Taxonomy" id="9606"/>
    <lineage>
        <taxon>Eukaryota</taxon>
        <taxon>Metazoa</taxon>
        <taxon>Chordata</taxon>
        <taxon>Craniata</taxon>
        <taxon>Vertebrata</taxon>
        <taxon>Euteleostomi</taxon>
        <taxon>Mammalia</taxon>
        <taxon>Eutheria</taxon>
        <taxon>Euarchontoglires</taxon>
        <taxon>Primates</taxon>
        <taxon>Haplorrhini</taxon>
        <taxon>Catarrhini</taxon>
        <taxon>Hominidae</taxon>
        <taxon>Homo</taxon>
    </lineage>
</organism>
<sequence length="171" mass="19085">MVKLNSNPSEKGTKPPSVEDGFQTVPLITPLEVNHLQLPAPEKVIVKTRTEYQPEQKNKGKFRVPKIAEFTVTILVSLALAFLACIVFLVVYKAFTYDHSCPEGFVYKHKRCIPASLDAYYSSQDPNSRSRFYTVISHYSVAKQSTARAIGPWLSAAAVIHEPKPPKTQGH</sequence>
<gene>
    <name evidence="7" type="primary">NSG2</name>
    <name type="synonym">CALY3</name>
</gene>
<reference key="1">
    <citation type="submission" date="1999-03" db="EMBL/GenBank/DDBJ databases">
        <title>Cloning and identifying the HMP19 mRNA.</title>
        <authorList>
            <person name="Jin J."/>
            <person name="Li G."/>
            <person name="Hu S."/>
            <person name="Yuan J."/>
            <person name="Qiang B."/>
        </authorList>
    </citation>
    <scope>NUCLEOTIDE SEQUENCE [MRNA]</scope>
</reference>
<reference key="2">
    <citation type="journal article" date="2000" name="Proc. Natl. Acad. Sci. U.S.A.">
        <title>Gene expression profiling in the human hypothalamus-pituitary-adrenal axis and full-length cDNA cloning.</title>
        <authorList>
            <person name="Hu R.-M."/>
            <person name="Han Z.-G."/>
            <person name="Song H.-D."/>
            <person name="Peng Y.-D."/>
            <person name="Huang Q.-H."/>
            <person name="Ren S.-X."/>
            <person name="Gu Y.-J."/>
            <person name="Huang C.-H."/>
            <person name="Li Y.-B."/>
            <person name="Jiang C.-L."/>
            <person name="Fu G."/>
            <person name="Zhang Q.-H."/>
            <person name="Gu B.-W."/>
            <person name="Dai M."/>
            <person name="Mao Y.-F."/>
            <person name="Gao G.-F."/>
            <person name="Rong R."/>
            <person name="Ye M."/>
            <person name="Zhou J."/>
            <person name="Xu S.-H."/>
            <person name="Gu J."/>
            <person name="Shi J.-X."/>
            <person name="Jin W.-R."/>
            <person name="Zhang C.-K."/>
            <person name="Wu T.-M."/>
            <person name="Huang G.-Y."/>
            <person name="Chen Z."/>
            <person name="Chen M.-D."/>
            <person name="Chen J.-L."/>
        </authorList>
    </citation>
    <scope>NUCLEOTIDE SEQUENCE [LARGE SCALE MRNA]</scope>
    <source>
        <tissue>Hypothalamus</tissue>
    </source>
</reference>
<reference key="3">
    <citation type="journal article" date="2004" name="Nat. Genet.">
        <title>Complete sequencing and characterization of 21,243 full-length human cDNAs.</title>
        <authorList>
            <person name="Ota T."/>
            <person name="Suzuki Y."/>
            <person name="Nishikawa T."/>
            <person name="Otsuki T."/>
            <person name="Sugiyama T."/>
            <person name="Irie R."/>
            <person name="Wakamatsu A."/>
            <person name="Hayashi K."/>
            <person name="Sato H."/>
            <person name="Nagai K."/>
            <person name="Kimura K."/>
            <person name="Makita H."/>
            <person name="Sekine M."/>
            <person name="Obayashi M."/>
            <person name="Nishi T."/>
            <person name="Shibahara T."/>
            <person name="Tanaka T."/>
            <person name="Ishii S."/>
            <person name="Yamamoto J."/>
            <person name="Saito K."/>
            <person name="Kawai Y."/>
            <person name="Isono Y."/>
            <person name="Nakamura Y."/>
            <person name="Nagahari K."/>
            <person name="Murakami K."/>
            <person name="Yasuda T."/>
            <person name="Iwayanagi T."/>
            <person name="Wagatsuma M."/>
            <person name="Shiratori A."/>
            <person name="Sudo H."/>
            <person name="Hosoiri T."/>
            <person name="Kaku Y."/>
            <person name="Kodaira H."/>
            <person name="Kondo H."/>
            <person name="Sugawara M."/>
            <person name="Takahashi M."/>
            <person name="Kanda K."/>
            <person name="Yokoi T."/>
            <person name="Furuya T."/>
            <person name="Kikkawa E."/>
            <person name="Omura Y."/>
            <person name="Abe K."/>
            <person name="Kamihara K."/>
            <person name="Katsuta N."/>
            <person name="Sato K."/>
            <person name="Tanikawa M."/>
            <person name="Yamazaki M."/>
            <person name="Ninomiya K."/>
            <person name="Ishibashi T."/>
            <person name="Yamashita H."/>
            <person name="Murakawa K."/>
            <person name="Fujimori K."/>
            <person name="Tanai H."/>
            <person name="Kimata M."/>
            <person name="Watanabe M."/>
            <person name="Hiraoka S."/>
            <person name="Chiba Y."/>
            <person name="Ishida S."/>
            <person name="Ono Y."/>
            <person name="Takiguchi S."/>
            <person name="Watanabe S."/>
            <person name="Yosida M."/>
            <person name="Hotuta T."/>
            <person name="Kusano J."/>
            <person name="Kanehori K."/>
            <person name="Takahashi-Fujii A."/>
            <person name="Hara H."/>
            <person name="Tanase T.-O."/>
            <person name="Nomura Y."/>
            <person name="Togiya S."/>
            <person name="Komai F."/>
            <person name="Hara R."/>
            <person name="Takeuchi K."/>
            <person name="Arita M."/>
            <person name="Imose N."/>
            <person name="Musashino K."/>
            <person name="Yuuki H."/>
            <person name="Oshima A."/>
            <person name="Sasaki N."/>
            <person name="Aotsuka S."/>
            <person name="Yoshikawa Y."/>
            <person name="Matsunawa H."/>
            <person name="Ichihara T."/>
            <person name="Shiohata N."/>
            <person name="Sano S."/>
            <person name="Moriya S."/>
            <person name="Momiyama H."/>
            <person name="Satoh N."/>
            <person name="Takami S."/>
            <person name="Terashima Y."/>
            <person name="Suzuki O."/>
            <person name="Nakagawa S."/>
            <person name="Senoh A."/>
            <person name="Mizoguchi H."/>
            <person name="Goto Y."/>
            <person name="Shimizu F."/>
            <person name="Wakebe H."/>
            <person name="Hishigaki H."/>
            <person name="Watanabe T."/>
            <person name="Sugiyama A."/>
            <person name="Takemoto M."/>
            <person name="Kawakami B."/>
            <person name="Yamazaki M."/>
            <person name="Watanabe K."/>
            <person name="Kumagai A."/>
            <person name="Itakura S."/>
            <person name="Fukuzumi Y."/>
            <person name="Fujimori Y."/>
            <person name="Komiyama M."/>
            <person name="Tashiro H."/>
            <person name="Tanigami A."/>
            <person name="Fujiwara T."/>
            <person name="Ono T."/>
            <person name="Yamada K."/>
            <person name="Fujii Y."/>
            <person name="Ozaki K."/>
            <person name="Hirao M."/>
            <person name="Ohmori Y."/>
            <person name="Kawabata A."/>
            <person name="Hikiji T."/>
            <person name="Kobatake N."/>
            <person name="Inagaki H."/>
            <person name="Ikema Y."/>
            <person name="Okamoto S."/>
            <person name="Okitani R."/>
            <person name="Kawakami T."/>
            <person name="Noguchi S."/>
            <person name="Itoh T."/>
            <person name="Shigeta K."/>
            <person name="Senba T."/>
            <person name="Matsumura K."/>
            <person name="Nakajima Y."/>
            <person name="Mizuno T."/>
            <person name="Morinaga M."/>
            <person name="Sasaki M."/>
            <person name="Togashi T."/>
            <person name="Oyama M."/>
            <person name="Hata H."/>
            <person name="Watanabe M."/>
            <person name="Komatsu T."/>
            <person name="Mizushima-Sugano J."/>
            <person name="Satoh T."/>
            <person name="Shirai Y."/>
            <person name="Takahashi Y."/>
            <person name="Nakagawa K."/>
            <person name="Okumura K."/>
            <person name="Nagase T."/>
            <person name="Nomura N."/>
            <person name="Kikuchi H."/>
            <person name="Masuho Y."/>
            <person name="Yamashita R."/>
            <person name="Nakai K."/>
            <person name="Yada T."/>
            <person name="Nakamura Y."/>
            <person name="Ohara O."/>
            <person name="Isogai T."/>
            <person name="Sugano S."/>
        </authorList>
    </citation>
    <scope>NUCLEOTIDE SEQUENCE [LARGE SCALE MRNA]</scope>
    <source>
        <tissue>Amygdala</tissue>
    </source>
</reference>
<reference key="4">
    <citation type="submission" date="2005-09" db="EMBL/GenBank/DDBJ databases">
        <authorList>
            <person name="Mural R.J."/>
            <person name="Istrail S."/>
            <person name="Sutton G.G."/>
            <person name="Florea L."/>
            <person name="Halpern A.L."/>
            <person name="Mobarry C.M."/>
            <person name="Lippert R."/>
            <person name="Walenz B."/>
            <person name="Shatkay H."/>
            <person name="Dew I."/>
            <person name="Miller J.R."/>
            <person name="Flanigan M.J."/>
            <person name="Edwards N.J."/>
            <person name="Bolanos R."/>
            <person name="Fasulo D."/>
            <person name="Halldorsson B.V."/>
            <person name="Hannenhalli S."/>
            <person name="Turner R."/>
            <person name="Yooseph S."/>
            <person name="Lu F."/>
            <person name="Nusskern D.R."/>
            <person name="Shue B.C."/>
            <person name="Zheng X.H."/>
            <person name="Zhong F."/>
            <person name="Delcher A.L."/>
            <person name="Huson D.H."/>
            <person name="Kravitz S.A."/>
            <person name="Mouchard L."/>
            <person name="Reinert K."/>
            <person name="Remington K.A."/>
            <person name="Clark A.G."/>
            <person name="Waterman M.S."/>
            <person name="Eichler E.E."/>
            <person name="Adams M.D."/>
            <person name="Hunkapiller M.W."/>
            <person name="Myers E.W."/>
            <person name="Venter J.C."/>
        </authorList>
    </citation>
    <scope>NUCLEOTIDE SEQUENCE [LARGE SCALE GENOMIC DNA]</scope>
</reference>
<reference key="5">
    <citation type="journal article" date="2004" name="Genome Res.">
        <title>The status, quality, and expansion of the NIH full-length cDNA project: the Mammalian Gene Collection (MGC).</title>
        <authorList>
            <consortium name="The MGC Project Team"/>
        </authorList>
    </citation>
    <scope>NUCLEOTIDE SEQUENCE [LARGE SCALE MRNA]</scope>
    <source>
        <tissue>Brain</tissue>
    </source>
</reference>